<reference key="1">
    <citation type="journal article" date="1996" name="Science">
        <title>Complete genome sequence of the methanogenic archaeon, Methanococcus jannaschii.</title>
        <authorList>
            <person name="Bult C.J."/>
            <person name="White O."/>
            <person name="Olsen G.J."/>
            <person name="Zhou L."/>
            <person name="Fleischmann R.D."/>
            <person name="Sutton G.G."/>
            <person name="Blake J.A."/>
            <person name="FitzGerald L.M."/>
            <person name="Clayton R.A."/>
            <person name="Gocayne J.D."/>
            <person name="Kerlavage A.R."/>
            <person name="Dougherty B.A."/>
            <person name="Tomb J.-F."/>
            <person name="Adams M.D."/>
            <person name="Reich C.I."/>
            <person name="Overbeek R."/>
            <person name="Kirkness E.F."/>
            <person name="Weinstock K.G."/>
            <person name="Merrick J.M."/>
            <person name="Glodek A."/>
            <person name="Scott J.L."/>
            <person name="Geoghagen N.S.M."/>
            <person name="Weidman J.F."/>
            <person name="Fuhrmann J.L."/>
            <person name="Nguyen D."/>
            <person name="Utterback T.R."/>
            <person name="Kelley J.M."/>
            <person name="Peterson J.D."/>
            <person name="Sadow P.W."/>
            <person name="Hanna M.C."/>
            <person name="Cotton M.D."/>
            <person name="Roberts K.M."/>
            <person name="Hurst M.A."/>
            <person name="Kaine B.P."/>
            <person name="Borodovsky M."/>
            <person name="Klenk H.-P."/>
            <person name="Fraser C.M."/>
            <person name="Smith H.O."/>
            <person name="Woese C.R."/>
            <person name="Venter J.C."/>
        </authorList>
    </citation>
    <scope>NUCLEOTIDE SEQUENCE [LARGE SCALE GENOMIC DNA]</scope>
    <source>
        <strain>ATCC 43067 / DSM 2661 / JAL-1 / JCM 10045 / NBRC 100440</strain>
    </source>
</reference>
<name>SYM_METJA</name>
<comment type="function">
    <text evidence="1">Is required not only for elongation of protein synthesis but also for the initiation of all mRNA translation through initiator tRNA(fMet) aminoacylation.</text>
</comment>
<comment type="catalytic activity">
    <reaction evidence="1">
        <text>tRNA(Met) + L-methionine + ATP = L-methionyl-tRNA(Met) + AMP + diphosphate</text>
        <dbReference type="Rhea" id="RHEA:13481"/>
        <dbReference type="Rhea" id="RHEA-COMP:9667"/>
        <dbReference type="Rhea" id="RHEA-COMP:9698"/>
        <dbReference type="ChEBI" id="CHEBI:30616"/>
        <dbReference type="ChEBI" id="CHEBI:33019"/>
        <dbReference type="ChEBI" id="CHEBI:57844"/>
        <dbReference type="ChEBI" id="CHEBI:78442"/>
        <dbReference type="ChEBI" id="CHEBI:78530"/>
        <dbReference type="ChEBI" id="CHEBI:456215"/>
        <dbReference type="EC" id="6.1.1.10"/>
    </reaction>
</comment>
<comment type="cofactor">
    <cofactor evidence="1">
        <name>Zn(2+)</name>
        <dbReference type="ChEBI" id="CHEBI:29105"/>
    </cofactor>
    <text evidence="1">Binds 1 zinc ion per subunit.</text>
</comment>
<comment type="subunit">
    <text evidence="1">Homodimer.</text>
</comment>
<comment type="subcellular location">
    <subcellularLocation>
        <location evidence="1">Cytoplasm</location>
    </subcellularLocation>
</comment>
<comment type="similarity">
    <text evidence="1">Belongs to the class-I aminoacyl-tRNA synthetase family. MetG type 1 subfamily.</text>
</comment>
<protein>
    <recommendedName>
        <fullName evidence="1">Methionine--tRNA ligase</fullName>
        <ecNumber evidence="1">6.1.1.10</ecNumber>
    </recommendedName>
    <alternativeName>
        <fullName evidence="1">Methionyl-tRNA synthetase</fullName>
        <shortName evidence="1">MetRS</shortName>
    </alternativeName>
</protein>
<dbReference type="EC" id="6.1.1.10" evidence="1"/>
<dbReference type="EMBL" id="L77117">
    <property type="protein sequence ID" value="AAB99269.1"/>
    <property type="molecule type" value="Genomic_DNA"/>
</dbReference>
<dbReference type="PIR" id="F64457">
    <property type="entry name" value="F64457"/>
</dbReference>
<dbReference type="SMR" id="Q58659"/>
<dbReference type="FunCoup" id="Q58659">
    <property type="interactions" value="268"/>
</dbReference>
<dbReference type="STRING" id="243232.MJ_1263"/>
<dbReference type="PaxDb" id="243232-MJ_1263"/>
<dbReference type="EnsemblBacteria" id="AAB99269">
    <property type="protein sequence ID" value="AAB99269"/>
    <property type="gene ID" value="MJ_1263"/>
</dbReference>
<dbReference type="KEGG" id="mja:MJ_1263"/>
<dbReference type="eggNOG" id="arCOG00810">
    <property type="taxonomic scope" value="Archaea"/>
</dbReference>
<dbReference type="HOGENOM" id="CLU_009710_1_2_2"/>
<dbReference type="InParanoid" id="Q58659"/>
<dbReference type="OrthoDB" id="371856at2157"/>
<dbReference type="PhylomeDB" id="Q58659"/>
<dbReference type="Proteomes" id="UP000000805">
    <property type="component" value="Chromosome"/>
</dbReference>
<dbReference type="GO" id="GO:0017101">
    <property type="term" value="C:aminoacyl-tRNA synthetase multienzyme complex"/>
    <property type="evidence" value="ECO:0000318"/>
    <property type="project" value="GO_Central"/>
</dbReference>
<dbReference type="GO" id="GO:0005829">
    <property type="term" value="C:cytosol"/>
    <property type="evidence" value="ECO:0000318"/>
    <property type="project" value="GO_Central"/>
</dbReference>
<dbReference type="GO" id="GO:0005524">
    <property type="term" value="F:ATP binding"/>
    <property type="evidence" value="ECO:0007669"/>
    <property type="project" value="UniProtKB-UniRule"/>
</dbReference>
<dbReference type="GO" id="GO:0046872">
    <property type="term" value="F:metal ion binding"/>
    <property type="evidence" value="ECO:0007669"/>
    <property type="project" value="UniProtKB-KW"/>
</dbReference>
<dbReference type="GO" id="GO:0004825">
    <property type="term" value="F:methionine-tRNA ligase activity"/>
    <property type="evidence" value="ECO:0000318"/>
    <property type="project" value="GO_Central"/>
</dbReference>
<dbReference type="GO" id="GO:0000049">
    <property type="term" value="F:tRNA binding"/>
    <property type="evidence" value="ECO:0007669"/>
    <property type="project" value="UniProtKB-KW"/>
</dbReference>
<dbReference type="GO" id="GO:0006431">
    <property type="term" value="P:methionyl-tRNA aminoacylation"/>
    <property type="evidence" value="ECO:0000318"/>
    <property type="project" value="GO_Central"/>
</dbReference>
<dbReference type="CDD" id="cd07957">
    <property type="entry name" value="Anticodon_Ia_Met"/>
    <property type="match status" value="1"/>
</dbReference>
<dbReference type="CDD" id="cd00814">
    <property type="entry name" value="MetRS_core"/>
    <property type="match status" value="1"/>
</dbReference>
<dbReference type="CDD" id="cd02800">
    <property type="entry name" value="tRNA_bind_EcMetRS_like"/>
    <property type="match status" value="1"/>
</dbReference>
<dbReference type="FunFam" id="2.20.28.20:FF:000001">
    <property type="entry name" value="Methionine--tRNA ligase"/>
    <property type="match status" value="1"/>
</dbReference>
<dbReference type="FunFam" id="2.40.50.140:FF:000042">
    <property type="entry name" value="Methionine--tRNA ligase"/>
    <property type="match status" value="1"/>
</dbReference>
<dbReference type="Gene3D" id="3.40.50.620">
    <property type="entry name" value="HUPs"/>
    <property type="match status" value="1"/>
</dbReference>
<dbReference type="Gene3D" id="1.10.730.10">
    <property type="entry name" value="Isoleucyl-tRNA Synthetase, Domain 1"/>
    <property type="match status" value="1"/>
</dbReference>
<dbReference type="Gene3D" id="2.20.28.20">
    <property type="entry name" value="Methionyl-tRNA synthetase, Zn-domain"/>
    <property type="match status" value="1"/>
</dbReference>
<dbReference type="Gene3D" id="2.40.50.140">
    <property type="entry name" value="Nucleic acid-binding proteins"/>
    <property type="match status" value="1"/>
</dbReference>
<dbReference type="HAMAP" id="MF_00098">
    <property type="entry name" value="Met_tRNA_synth_type1"/>
    <property type="match status" value="1"/>
</dbReference>
<dbReference type="InterPro" id="IPR041872">
    <property type="entry name" value="Anticodon_Met"/>
</dbReference>
<dbReference type="InterPro" id="IPR004495">
    <property type="entry name" value="Met-tRNA-synth_bsu_C"/>
</dbReference>
<dbReference type="InterPro" id="IPR023458">
    <property type="entry name" value="Met-tRNA_ligase_1"/>
</dbReference>
<dbReference type="InterPro" id="IPR014758">
    <property type="entry name" value="Met-tRNA_synth"/>
</dbReference>
<dbReference type="InterPro" id="IPR015413">
    <property type="entry name" value="Methionyl/Leucyl_tRNA_Synth"/>
</dbReference>
<dbReference type="InterPro" id="IPR033911">
    <property type="entry name" value="MetRS_core"/>
</dbReference>
<dbReference type="InterPro" id="IPR029038">
    <property type="entry name" value="MetRS_Zn"/>
</dbReference>
<dbReference type="InterPro" id="IPR012340">
    <property type="entry name" value="NA-bd_OB-fold"/>
</dbReference>
<dbReference type="InterPro" id="IPR014729">
    <property type="entry name" value="Rossmann-like_a/b/a_fold"/>
</dbReference>
<dbReference type="InterPro" id="IPR002547">
    <property type="entry name" value="tRNA-bd_dom"/>
</dbReference>
<dbReference type="InterPro" id="IPR009080">
    <property type="entry name" value="tRNAsynth_Ia_anticodon-bd"/>
</dbReference>
<dbReference type="NCBIfam" id="TIGR00398">
    <property type="entry name" value="metG"/>
    <property type="match status" value="1"/>
</dbReference>
<dbReference type="NCBIfam" id="TIGR00399">
    <property type="entry name" value="metG_C_term"/>
    <property type="match status" value="1"/>
</dbReference>
<dbReference type="NCBIfam" id="NF001100">
    <property type="entry name" value="PRK00133.1"/>
    <property type="match status" value="1"/>
</dbReference>
<dbReference type="PANTHER" id="PTHR45765">
    <property type="entry name" value="METHIONINE--TRNA LIGASE"/>
    <property type="match status" value="1"/>
</dbReference>
<dbReference type="PANTHER" id="PTHR45765:SF1">
    <property type="entry name" value="METHIONINE--TRNA LIGASE, CYTOPLASMIC"/>
    <property type="match status" value="1"/>
</dbReference>
<dbReference type="Pfam" id="PF19303">
    <property type="entry name" value="Anticodon_3"/>
    <property type="match status" value="1"/>
</dbReference>
<dbReference type="Pfam" id="PF09334">
    <property type="entry name" value="tRNA-synt_1g"/>
    <property type="match status" value="1"/>
</dbReference>
<dbReference type="Pfam" id="PF01588">
    <property type="entry name" value="tRNA_bind"/>
    <property type="match status" value="1"/>
</dbReference>
<dbReference type="PRINTS" id="PR01041">
    <property type="entry name" value="TRNASYNTHMET"/>
</dbReference>
<dbReference type="SUPFAM" id="SSF47323">
    <property type="entry name" value="Anticodon-binding domain of a subclass of class I aminoacyl-tRNA synthetases"/>
    <property type="match status" value="1"/>
</dbReference>
<dbReference type="SUPFAM" id="SSF57770">
    <property type="entry name" value="Methionyl-tRNA synthetase (MetRS), Zn-domain"/>
    <property type="match status" value="1"/>
</dbReference>
<dbReference type="SUPFAM" id="SSF50249">
    <property type="entry name" value="Nucleic acid-binding proteins"/>
    <property type="match status" value="1"/>
</dbReference>
<dbReference type="SUPFAM" id="SSF52374">
    <property type="entry name" value="Nucleotidylyl transferase"/>
    <property type="match status" value="1"/>
</dbReference>
<dbReference type="PROSITE" id="PS50886">
    <property type="entry name" value="TRBD"/>
    <property type="match status" value="1"/>
</dbReference>
<keyword id="KW-0030">Aminoacyl-tRNA synthetase</keyword>
<keyword id="KW-0067">ATP-binding</keyword>
<keyword id="KW-0963">Cytoplasm</keyword>
<keyword id="KW-0436">Ligase</keyword>
<keyword id="KW-0479">Metal-binding</keyword>
<keyword id="KW-0547">Nucleotide-binding</keyword>
<keyword id="KW-0648">Protein biosynthesis</keyword>
<keyword id="KW-1185">Reference proteome</keyword>
<keyword id="KW-0694">RNA-binding</keyword>
<keyword id="KW-0820">tRNA-binding</keyword>
<keyword id="KW-0862">Zinc</keyword>
<gene>
    <name evidence="1" type="primary">metG</name>
    <name type="ordered locus">MJ1263</name>
</gene>
<evidence type="ECO:0000255" key="1">
    <source>
        <dbReference type="HAMAP-Rule" id="MF_00098"/>
    </source>
</evidence>
<accession>Q58659</accession>
<sequence length="651" mass="75559">MRYLITTALAYTNGPLHLGHARSTYIPADIIYKYLKLRGEDVIHVGGTDNHGVPITLTAEKEGKSPEEIVEKYHNEIKEDLDLLGVEFDAFGKTHSQIHIETAQEFYLKLKENGYIYEKEIEQFYCPNCKKFLPDRYVEGICPYCGGEARGDHCEVCGRHLEPFELKDPYCVICKGKPEIRKTKHHFFKLSALKKELEEYIKNAKEMPEHVKNMALNWIKELHDWDISRDISWGVPIPGTNQVMYVWLEAPIGYISFTKMLGEIWKKYWLEKDTKIYHFIGKDITVHHAVFWPGMLIAHGSFNLPTAVVSGGYLTLEGRKMSTSKRWVVWVKDFVKNFDADYLRYYLIMSAPLFKDCDFSFDDFKNKINNELINIIGNFTHRVLTFTHRKFKKVPIVDEDRLKEEDKELLKKCEETLEAVDKNIRSFKFRDALVNILHLAIEGNSYFQKMEPWAVDDEERLKEILYTCCKTVKTLVYLLYPYMPKKSLALLELMNEELDLELRGNELKKPKIIFKKIDNKKIEEMKKKLYENKKEETKGGEKMEQIDISYLEKIDLRVGEVVEAEDIPKSKKLLKLMVDLGDEKRQIVSGIKGYYKPEDLVGKKVIVICNLKPAKLCGVLSEGMILAAEDDEGNVSLLTVDKDIKAGSKVR</sequence>
<feature type="chain" id="PRO_0000139187" description="Methionine--tRNA ligase">
    <location>
        <begin position="1"/>
        <end position="651"/>
    </location>
</feature>
<feature type="domain" description="tRNA-binding" evidence="1">
    <location>
        <begin position="550"/>
        <end position="651"/>
    </location>
</feature>
<feature type="short sequence motif" description="'HIGH' region">
    <location>
        <begin position="10"/>
        <end position="20"/>
    </location>
</feature>
<feature type="short sequence motif" description="'KMSKS' region">
    <location>
        <begin position="320"/>
        <end position="324"/>
    </location>
</feature>
<feature type="binding site" evidence="1">
    <location>
        <position position="142"/>
    </location>
    <ligand>
        <name>Zn(2+)</name>
        <dbReference type="ChEBI" id="CHEBI:29105"/>
    </ligand>
</feature>
<feature type="binding site" evidence="1">
    <location>
        <position position="145"/>
    </location>
    <ligand>
        <name>Zn(2+)</name>
        <dbReference type="ChEBI" id="CHEBI:29105"/>
    </ligand>
</feature>
<feature type="binding site" evidence="1">
    <location>
        <position position="154"/>
    </location>
    <ligand>
        <name>Zn(2+)</name>
        <dbReference type="ChEBI" id="CHEBI:29105"/>
    </ligand>
</feature>
<feature type="binding site" evidence="1">
    <location>
        <position position="157"/>
    </location>
    <ligand>
        <name>Zn(2+)</name>
        <dbReference type="ChEBI" id="CHEBI:29105"/>
    </ligand>
</feature>
<feature type="binding site" evidence="1">
    <location>
        <position position="323"/>
    </location>
    <ligand>
        <name>ATP</name>
        <dbReference type="ChEBI" id="CHEBI:30616"/>
    </ligand>
</feature>
<organism>
    <name type="scientific">Methanocaldococcus jannaschii (strain ATCC 43067 / DSM 2661 / JAL-1 / JCM 10045 / NBRC 100440)</name>
    <name type="common">Methanococcus jannaschii</name>
    <dbReference type="NCBI Taxonomy" id="243232"/>
    <lineage>
        <taxon>Archaea</taxon>
        <taxon>Methanobacteriati</taxon>
        <taxon>Methanobacteriota</taxon>
        <taxon>Methanomada group</taxon>
        <taxon>Methanococci</taxon>
        <taxon>Methanococcales</taxon>
        <taxon>Methanocaldococcaceae</taxon>
        <taxon>Methanocaldococcus</taxon>
    </lineage>
</organism>
<proteinExistence type="inferred from homology"/>